<accession>Q1R4X2</accession>
<comment type="function">
    <text evidence="1">Catalyzes the interconversion between ADP-D-glycero-beta-D-manno-heptose and ADP-L-glycero-beta-D-manno-heptose via an epimerization at carbon 6 of the heptose.</text>
</comment>
<comment type="catalytic activity">
    <reaction evidence="1">
        <text>ADP-D-glycero-beta-D-manno-heptose = ADP-L-glycero-beta-D-manno-heptose</text>
        <dbReference type="Rhea" id="RHEA:17577"/>
        <dbReference type="ChEBI" id="CHEBI:59967"/>
        <dbReference type="ChEBI" id="CHEBI:61506"/>
        <dbReference type="EC" id="5.1.3.20"/>
    </reaction>
</comment>
<comment type="cofactor">
    <cofactor evidence="1">
        <name>NADP(+)</name>
        <dbReference type="ChEBI" id="CHEBI:58349"/>
    </cofactor>
    <text evidence="1">Binds 1 NADP(+) per subunit.</text>
</comment>
<comment type="pathway">
    <text evidence="1">Nucleotide-sugar biosynthesis; ADP-L-glycero-beta-D-manno-heptose biosynthesis; ADP-L-glycero-beta-D-manno-heptose from D-glycero-beta-D-manno-heptose 7-phosphate: step 4/4.</text>
</comment>
<comment type="subunit">
    <text evidence="1">Homopentamer.</text>
</comment>
<comment type="domain">
    <text evidence="1">Contains a large N-terminal NADP-binding domain, and a smaller C-terminal substrate-binding domain.</text>
</comment>
<comment type="similarity">
    <text evidence="1">Belongs to the NAD(P)-dependent epimerase/dehydratase family. HldD subfamily.</text>
</comment>
<evidence type="ECO:0000255" key="1">
    <source>
        <dbReference type="HAMAP-Rule" id="MF_01601"/>
    </source>
</evidence>
<name>HLDD_ECOUT</name>
<keyword id="KW-0007">Acetylation</keyword>
<keyword id="KW-0119">Carbohydrate metabolism</keyword>
<keyword id="KW-0413">Isomerase</keyword>
<keyword id="KW-0521">NADP</keyword>
<dbReference type="EC" id="5.1.3.20" evidence="1"/>
<dbReference type="EMBL" id="CP000243">
    <property type="protein sequence ID" value="ABE09592.1"/>
    <property type="molecule type" value="Genomic_DNA"/>
</dbReference>
<dbReference type="SMR" id="Q1R4X2"/>
<dbReference type="KEGG" id="eci:UTI89_C4164"/>
<dbReference type="HOGENOM" id="CLU_007383_1_3_6"/>
<dbReference type="UniPathway" id="UPA00356">
    <property type="reaction ID" value="UER00440"/>
</dbReference>
<dbReference type="Proteomes" id="UP000001952">
    <property type="component" value="Chromosome"/>
</dbReference>
<dbReference type="GO" id="GO:0008712">
    <property type="term" value="F:ADP-glyceromanno-heptose 6-epimerase activity"/>
    <property type="evidence" value="ECO:0007669"/>
    <property type="project" value="UniProtKB-UniRule"/>
</dbReference>
<dbReference type="GO" id="GO:0050661">
    <property type="term" value="F:NADP binding"/>
    <property type="evidence" value="ECO:0007669"/>
    <property type="project" value="InterPro"/>
</dbReference>
<dbReference type="GO" id="GO:0097171">
    <property type="term" value="P:ADP-L-glycero-beta-D-manno-heptose biosynthetic process"/>
    <property type="evidence" value="ECO:0007669"/>
    <property type="project" value="UniProtKB-UniPathway"/>
</dbReference>
<dbReference type="GO" id="GO:0005975">
    <property type="term" value="P:carbohydrate metabolic process"/>
    <property type="evidence" value="ECO:0007669"/>
    <property type="project" value="UniProtKB-UniRule"/>
</dbReference>
<dbReference type="CDD" id="cd05248">
    <property type="entry name" value="ADP_GME_SDR_e"/>
    <property type="match status" value="1"/>
</dbReference>
<dbReference type="Gene3D" id="3.40.50.720">
    <property type="entry name" value="NAD(P)-binding Rossmann-like Domain"/>
    <property type="match status" value="1"/>
</dbReference>
<dbReference type="Gene3D" id="3.90.25.10">
    <property type="entry name" value="UDP-galactose 4-epimerase, domain 1"/>
    <property type="match status" value="1"/>
</dbReference>
<dbReference type="HAMAP" id="MF_01601">
    <property type="entry name" value="Heptose_epimerase"/>
    <property type="match status" value="1"/>
</dbReference>
<dbReference type="InterPro" id="IPR001509">
    <property type="entry name" value="Epimerase_deHydtase"/>
</dbReference>
<dbReference type="InterPro" id="IPR011912">
    <property type="entry name" value="Heptose_epim"/>
</dbReference>
<dbReference type="InterPro" id="IPR036291">
    <property type="entry name" value="NAD(P)-bd_dom_sf"/>
</dbReference>
<dbReference type="NCBIfam" id="TIGR02197">
    <property type="entry name" value="heptose_epim"/>
    <property type="match status" value="1"/>
</dbReference>
<dbReference type="NCBIfam" id="NF008360">
    <property type="entry name" value="PRK11150.1"/>
    <property type="match status" value="1"/>
</dbReference>
<dbReference type="PANTHER" id="PTHR43103:SF3">
    <property type="entry name" value="ADP-L-GLYCERO-D-MANNO-HEPTOSE-6-EPIMERASE"/>
    <property type="match status" value="1"/>
</dbReference>
<dbReference type="PANTHER" id="PTHR43103">
    <property type="entry name" value="NUCLEOSIDE-DIPHOSPHATE-SUGAR EPIMERASE"/>
    <property type="match status" value="1"/>
</dbReference>
<dbReference type="Pfam" id="PF01370">
    <property type="entry name" value="Epimerase"/>
    <property type="match status" value="1"/>
</dbReference>
<dbReference type="SUPFAM" id="SSF51735">
    <property type="entry name" value="NAD(P)-binding Rossmann-fold domains"/>
    <property type="match status" value="1"/>
</dbReference>
<sequence length="310" mass="34894">MIIVTGGAGFIGSNIVKALNDKGITDILVVDNLKDGTKFVNLVDLDIADYMDKEDFLIQIMAGEEFGDVEAIFHEGACSSTTEWDGKYMMDNNYQYSKELLHYCLEREIPFLYASSAATYGGRTSDFIESREYEKPLNVYGYSKFLFDEYVRQILPEANSQIVGFRYFNVYGPREGHKGSMASVAFHLNTQLNNGESPKLFEGSENFKRDFVYVGDVADVNLWFLENGVSGIFNLGTGRAESFQAVADATLAYHKKGQIEYIPFPDKLKGRYQAFTQADLTNLRAAGYDKPFKTVAEGVTEYMAWLNRDA</sequence>
<reference key="1">
    <citation type="journal article" date="2006" name="Proc. Natl. Acad. Sci. U.S.A.">
        <title>Identification of genes subject to positive selection in uropathogenic strains of Escherichia coli: a comparative genomics approach.</title>
        <authorList>
            <person name="Chen S.L."/>
            <person name="Hung C.-S."/>
            <person name="Xu J."/>
            <person name="Reigstad C.S."/>
            <person name="Magrini V."/>
            <person name="Sabo A."/>
            <person name="Blasiar D."/>
            <person name="Bieri T."/>
            <person name="Meyer R.R."/>
            <person name="Ozersky P."/>
            <person name="Armstrong J.R."/>
            <person name="Fulton R.S."/>
            <person name="Latreille J.P."/>
            <person name="Spieth J."/>
            <person name="Hooton T.M."/>
            <person name="Mardis E.R."/>
            <person name="Hultgren S.J."/>
            <person name="Gordon J.I."/>
        </authorList>
    </citation>
    <scope>NUCLEOTIDE SEQUENCE [LARGE SCALE GENOMIC DNA]</scope>
    <source>
        <strain>UTI89 / UPEC</strain>
    </source>
</reference>
<organism>
    <name type="scientific">Escherichia coli (strain UTI89 / UPEC)</name>
    <dbReference type="NCBI Taxonomy" id="364106"/>
    <lineage>
        <taxon>Bacteria</taxon>
        <taxon>Pseudomonadati</taxon>
        <taxon>Pseudomonadota</taxon>
        <taxon>Gammaproteobacteria</taxon>
        <taxon>Enterobacterales</taxon>
        <taxon>Enterobacteriaceae</taxon>
        <taxon>Escherichia</taxon>
    </lineage>
</organism>
<protein>
    <recommendedName>
        <fullName evidence="1">ADP-L-glycero-D-manno-heptose-6-epimerase</fullName>
        <ecNumber evidence="1">5.1.3.20</ecNumber>
    </recommendedName>
    <alternativeName>
        <fullName evidence="1">ADP-L-glycero-beta-D-manno-heptose-6-epimerase</fullName>
        <shortName evidence="1">ADP-glyceromanno-heptose 6-epimerase</shortName>
        <shortName evidence="1">ADP-hep 6-epimerase</shortName>
        <shortName evidence="1">AGME</shortName>
    </alternativeName>
</protein>
<proteinExistence type="inferred from homology"/>
<gene>
    <name evidence="1" type="primary">hldD</name>
    <name type="ordered locus">UTI89_C4164</name>
</gene>
<feature type="chain" id="PRO_0000255729" description="ADP-L-glycero-D-manno-heptose-6-epimerase">
    <location>
        <begin position="1"/>
        <end position="310"/>
    </location>
</feature>
<feature type="active site" description="Proton acceptor" evidence="1">
    <location>
        <position position="140"/>
    </location>
</feature>
<feature type="active site" description="Proton acceptor" evidence="1">
    <location>
        <position position="178"/>
    </location>
</feature>
<feature type="binding site" evidence="1">
    <location>
        <begin position="10"/>
        <end position="11"/>
    </location>
    <ligand>
        <name>NADP(+)</name>
        <dbReference type="ChEBI" id="CHEBI:58349"/>
    </ligand>
</feature>
<feature type="binding site" evidence="1">
    <location>
        <begin position="31"/>
        <end position="32"/>
    </location>
    <ligand>
        <name>NADP(+)</name>
        <dbReference type="ChEBI" id="CHEBI:58349"/>
    </ligand>
</feature>
<feature type="binding site" evidence="1">
    <location>
        <position position="38"/>
    </location>
    <ligand>
        <name>NADP(+)</name>
        <dbReference type="ChEBI" id="CHEBI:58349"/>
    </ligand>
</feature>
<feature type="binding site" evidence="1">
    <location>
        <position position="53"/>
    </location>
    <ligand>
        <name>NADP(+)</name>
        <dbReference type="ChEBI" id="CHEBI:58349"/>
    </ligand>
</feature>
<feature type="binding site" evidence="1">
    <location>
        <begin position="75"/>
        <end position="79"/>
    </location>
    <ligand>
        <name>NADP(+)</name>
        <dbReference type="ChEBI" id="CHEBI:58349"/>
    </ligand>
</feature>
<feature type="binding site" evidence="1">
    <location>
        <position position="92"/>
    </location>
    <ligand>
        <name>NADP(+)</name>
        <dbReference type="ChEBI" id="CHEBI:58349"/>
    </ligand>
</feature>
<feature type="binding site" evidence="1">
    <location>
        <position position="144"/>
    </location>
    <ligand>
        <name>NADP(+)</name>
        <dbReference type="ChEBI" id="CHEBI:58349"/>
    </ligand>
</feature>
<feature type="binding site" evidence="1">
    <location>
        <position position="169"/>
    </location>
    <ligand>
        <name>substrate</name>
    </ligand>
</feature>
<feature type="binding site" evidence="1">
    <location>
        <position position="170"/>
    </location>
    <ligand>
        <name>NADP(+)</name>
        <dbReference type="ChEBI" id="CHEBI:58349"/>
    </ligand>
</feature>
<feature type="binding site" evidence="1">
    <location>
        <position position="178"/>
    </location>
    <ligand>
        <name>NADP(+)</name>
        <dbReference type="ChEBI" id="CHEBI:58349"/>
    </ligand>
</feature>
<feature type="binding site" evidence="1">
    <location>
        <position position="180"/>
    </location>
    <ligand>
        <name>substrate</name>
    </ligand>
</feature>
<feature type="binding site" evidence="1">
    <location>
        <position position="187"/>
    </location>
    <ligand>
        <name>substrate</name>
    </ligand>
</feature>
<feature type="binding site" evidence="1">
    <location>
        <begin position="201"/>
        <end position="204"/>
    </location>
    <ligand>
        <name>substrate</name>
    </ligand>
</feature>
<feature type="binding site" evidence="1">
    <location>
        <position position="209"/>
    </location>
    <ligand>
        <name>substrate</name>
    </ligand>
</feature>
<feature type="binding site" evidence="1">
    <location>
        <position position="272"/>
    </location>
    <ligand>
        <name>substrate</name>
    </ligand>
</feature>
<feature type="modified residue" description="N6-acetyllysine" evidence="1">
    <location>
        <position position="267"/>
    </location>
</feature>